<dbReference type="EMBL" id="AM270243">
    <property type="protein sequence ID" value="CAK40782.1"/>
    <property type="molecule type" value="Genomic_DNA"/>
</dbReference>
<dbReference type="EnsemblFungi" id="CAK40782">
    <property type="protein sequence ID" value="CAK40782"/>
    <property type="gene ID" value="An11g07350"/>
</dbReference>
<dbReference type="VEuPathDB" id="FungiDB:An11g07350"/>
<dbReference type="HOGENOM" id="CLU_004083_7_1_1"/>
<dbReference type="Proteomes" id="UP000006706">
    <property type="component" value="Chromosome 7R"/>
</dbReference>
<dbReference type="GO" id="GO:0005634">
    <property type="term" value="C:nucleus"/>
    <property type="evidence" value="ECO:0007669"/>
    <property type="project" value="UniProtKB-SubCell"/>
</dbReference>
<dbReference type="GO" id="GO:0003677">
    <property type="term" value="F:DNA binding"/>
    <property type="evidence" value="ECO:0007669"/>
    <property type="project" value="UniProtKB-KW"/>
</dbReference>
<dbReference type="GO" id="GO:0000981">
    <property type="term" value="F:DNA-binding transcription factor activity, RNA polymerase II-specific"/>
    <property type="evidence" value="ECO:0007669"/>
    <property type="project" value="InterPro"/>
</dbReference>
<dbReference type="GO" id="GO:0008270">
    <property type="term" value="F:zinc ion binding"/>
    <property type="evidence" value="ECO:0007669"/>
    <property type="project" value="InterPro"/>
</dbReference>
<dbReference type="GO" id="GO:0006351">
    <property type="term" value="P:DNA-templated transcription"/>
    <property type="evidence" value="ECO:0007669"/>
    <property type="project" value="InterPro"/>
</dbReference>
<dbReference type="GO" id="GO:0009893">
    <property type="term" value="P:positive regulation of metabolic process"/>
    <property type="evidence" value="ECO:0007669"/>
    <property type="project" value="UniProtKB-ARBA"/>
</dbReference>
<dbReference type="CDD" id="cd12148">
    <property type="entry name" value="fungal_TF_MHR"/>
    <property type="match status" value="1"/>
</dbReference>
<dbReference type="CDD" id="cd00067">
    <property type="entry name" value="GAL4"/>
    <property type="match status" value="1"/>
</dbReference>
<dbReference type="Gene3D" id="4.10.240.10">
    <property type="entry name" value="Zn(2)-C6 fungal-type DNA-binding domain"/>
    <property type="match status" value="1"/>
</dbReference>
<dbReference type="InterPro" id="IPR050613">
    <property type="entry name" value="Sec_Metabolite_Reg"/>
</dbReference>
<dbReference type="InterPro" id="IPR007219">
    <property type="entry name" value="Transcription_factor_dom_fun"/>
</dbReference>
<dbReference type="InterPro" id="IPR036864">
    <property type="entry name" value="Zn2-C6_fun-type_DNA-bd_sf"/>
</dbReference>
<dbReference type="InterPro" id="IPR001138">
    <property type="entry name" value="Zn2Cys6_DnaBD"/>
</dbReference>
<dbReference type="PANTHER" id="PTHR31001">
    <property type="entry name" value="UNCHARACTERIZED TRANSCRIPTIONAL REGULATORY PROTEIN"/>
    <property type="match status" value="1"/>
</dbReference>
<dbReference type="PANTHER" id="PTHR31001:SF50">
    <property type="entry name" value="ZN(II)2CYS6 TRANSCRIPTION FACTOR (EUROFUNG)"/>
    <property type="match status" value="1"/>
</dbReference>
<dbReference type="Pfam" id="PF04082">
    <property type="entry name" value="Fungal_trans"/>
    <property type="match status" value="1"/>
</dbReference>
<dbReference type="Pfam" id="PF00172">
    <property type="entry name" value="Zn_clus"/>
    <property type="match status" value="1"/>
</dbReference>
<dbReference type="SMART" id="SM00906">
    <property type="entry name" value="Fungal_trans"/>
    <property type="match status" value="1"/>
</dbReference>
<dbReference type="SMART" id="SM00066">
    <property type="entry name" value="GAL4"/>
    <property type="match status" value="1"/>
</dbReference>
<dbReference type="SUPFAM" id="SSF57701">
    <property type="entry name" value="Zn2/Cys6 DNA-binding domain"/>
    <property type="match status" value="1"/>
</dbReference>
<dbReference type="PROSITE" id="PS00463">
    <property type="entry name" value="ZN2_CY6_FUNGAL_1"/>
    <property type="match status" value="1"/>
</dbReference>
<dbReference type="PROSITE" id="PS50048">
    <property type="entry name" value="ZN2_CY6_FUNGAL_2"/>
    <property type="match status" value="1"/>
</dbReference>
<protein>
    <recommendedName>
        <fullName evidence="4">C6 finger domain transcription factor adaR</fullName>
    </recommendedName>
    <alternativeName>
        <fullName evidence="4">2-acetyl-2-decarboxamidoanthrotainin biosynthesis cluster protein R</fullName>
    </alternativeName>
</protein>
<name>ADAR_ASPNC</name>
<keyword id="KW-0238">DNA-binding</keyword>
<keyword id="KW-0479">Metal-binding</keyword>
<keyword id="KW-0539">Nucleus</keyword>
<keyword id="KW-1185">Reference proteome</keyword>
<keyword id="KW-0804">Transcription</keyword>
<keyword id="KW-0805">Transcription regulation</keyword>
<keyword id="KW-0862">Zinc</keyword>
<comment type="function">
    <text evidence="3">Transcription factor that specifically regulates the expression of the ada gene cluster involved in the biosynthesis of the linear tetracyclic TAN-1612 neuropeptide Y receptor antagonist.</text>
</comment>
<comment type="subcellular location">
    <subcellularLocation>
        <location evidence="1">Nucleus</location>
    </subcellularLocation>
</comment>
<reference key="1">
    <citation type="journal article" date="2007" name="Nat. Biotechnol.">
        <title>Genome sequencing and analysis of the versatile cell factory Aspergillus niger CBS 513.88.</title>
        <authorList>
            <person name="Pel H.J."/>
            <person name="de Winde J.H."/>
            <person name="Archer D.B."/>
            <person name="Dyer P.S."/>
            <person name="Hofmann G."/>
            <person name="Schaap P.J."/>
            <person name="Turner G."/>
            <person name="de Vries R.P."/>
            <person name="Albang R."/>
            <person name="Albermann K."/>
            <person name="Andersen M.R."/>
            <person name="Bendtsen J.D."/>
            <person name="Benen J.A.E."/>
            <person name="van den Berg M."/>
            <person name="Breestraat S."/>
            <person name="Caddick M.X."/>
            <person name="Contreras R."/>
            <person name="Cornell M."/>
            <person name="Coutinho P.M."/>
            <person name="Danchin E.G.J."/>
            <person name="Debets A.J.M."/>
            <person name="Dekker P."/>
            <person name="van Dijck P.W.M."/>
            <person name="van Dijk A."/>
            <person name="Dijkhuizen L."/>
            <person name="Driessen A.J.M."/>
            <person name="d'Enfert C."/>
            <person name="Geysens S."/>
            <person name="Goosen C."/>
            <person name="Groot G.S.P."/>
            <person name="de Groot P.W.J."/>
            <person name="Guillemette T."/>
            <person name="Henrissat B."/>
            <person name="Herweijer M."/>
            <person name="van den Hombergh J.P.T.W."/>
            <person name="van den Hondel C.A.M.J.J."/>
            <person name="van der Heijden R.T.J.M."/>
            <person name="van der Kaaij R.M."/>
            <person name="Klis F.M."/>
            <person name="Kools H.J."/>
            <person name="Kubicek C.P."/>
            <person name="van Kuyk P.A."/>
            <person name="Lauber J."/>
            <person name="Lu X."/>
            <person name="van der Maarel M.J.E.C."/>
            <person name="Meulenberg R."/>
            <person name="Menke H."/>
            <person name="Mortimer M.A."/>
            <person name="Nielsen J."/>
            <person name="Oliver S.G."/>
            <person name="Olsthoorn M."/>
            <person name="Pal K."/>
            <person name="van Peij N.N.M.E."/>
            <person name="Ram A.F.J."/>
            <person name="Rinas U."/>
            <person name="Roubos J.A."/>
            <person name="Sagt C.M.J."/>
            <person name="Schmoll M."/>
            <person name="Sun J."/>
            <person name="Ussery D."/>
            <person name="Varga J."/>
            <person name="Vervecken W."/>
            <person name="van de Vondervoort P.J.J."/>
            <person name="Wedler H."/>
            <person name="Woesten H.A.B."/>
            <person name="Zeng A.-P."/>
            <person name="van Ooyen A.J.J."/>
            <person name="Visser J."/>
            <person name="Stam H."/>
        </authorList>
    </citation>
    <scope>NUCLEOTIDE SEQUENCE [LARGE SCALE GENOMIC DNA]</scope>
    <source>
        <strain>ATCC MYA-4892 / CBS 513.88 / FGSC A1513</strain>
    </source>
</reference>
<reference key="2">
    <citation type="journal article" date="2011" name="J. Am. Chem. Soc.">
        <title>Comparative characterization of fungal anthracenone and naphthacenedione biosynthetic pathways reveals an alpha-hydroxylation-dependent Claisen-like cyclization catalyzed by a dimanganese thioesterase.</title>
        <authorList>
            <person name="Li Y."/>
            <person name="Chooi Y.H."/>
            <person name="Sheng Y."/>
            <person name="Valentine J.S."/>
            <person name="Tang Y."/>
        </authorList>
    </citation>
    <scope>IDENTIFICATION</scope>
    <scope>FUNCTION</scope>
</reference>
<proteinExistence type="inferred from homology"/>
<sequence>MEQRSSPARSLPPRKTTTTPQLSCELCRKRKVKCDKLTPCTNCAASGTVCVPIYRTRLPRGRHATRPRRVSSPPPTSAPGETDRIIQPSVPVNEDLQERIYRLEALIQGMNSHSHTRTPSATSREQSVQLSDTSTFQTAPNPNTSPILNSSIVSKRLMLQRPDQFWADLVDEIHGLREVVESSLAGGQEGPIPSSDSAKSEPPNDDGIQVLGLGASNPSAALRSMSPLHNPVVARQLCEVYLQQVDPVIKILHRPSLNRWMVQGEPYLSYADGHPAVEALGSAVCYSAISSMTDNQCSVMFHANKADLLAEARVACETAIGRAGLLTTRDITVLQAFVLYLVARRSEDRTPAVWTLIALAVRIGKGLGLYLDPETETFFDQQIRRRLWFTICLMDLQASFGQASEPLISVDESASTALPQHINDSDFDPTTAAHSDPNREGLTDTTFALVTYHAQRTGRLLNFVQHDRKVDGGIPTPTSSTSGTSTSRSRTCDPSWPQQQARHFEQEALRLLHFCDPGTSAYAWFTWHGTQSLIATVRLAAARPLQWHGQAPPPRREGNTELLRLCLPVLEKAQLMHTDPRAEGFRWYVTIPWYALAMALAECYVSSDTALVRYAWPLVESSYLQYEATLGQSLGGPFGQLMRRMKEKLAAPAALPPSSLPSTNWSPATPPTFPGVPRPQSSHDDRHAPGCSWPVPTGSTPPADLGVPSLLPVSTWEALSPPSLDNPSLFGVPPTTTAVADGMDPGADIMWEELFSGIPFNEIAGPDTFFFDMNWGS</sequence>
<organism>
    <name type="scientific">Aspergillus niger (strain ATCC MYA-4892 / CBS 513.88 / FGSC A1513)</name>
    <dbReference type="NCBI Taxonomy" id="425011"/>
    <lineage>
        <taxon>Eukaryota</taxon>
        <taxon>Fungi</taxon>
        <taxon>Dikarya</taxon>
        <taxon>Ascomycota</taxon>
        <taxon>Pezizomycotina</taxon>
        <taxon>Eurotiomycetes</taxon>
        <taxon>Eurotiomycetidae</taxon>
        <taxon>Eurotiales</taxon>
        <taxon>Aspergillaceae</taxon>
        <taxon>Aspergillus</taxon>
        <taxon>Aspergillus subgen. Circumdati</taxon>
    </lineage>
</organism>
<evidence type="ECO:0000255" key="1">
    <source>
        <dbReference type="PROSITE-ProRule" id="PRU00227"/>
    </source>
</evidence>
<evidence type="ECO:0000256" key="2">
    <source>
        <dbReference type="SAM" id="MobiDB-lite"/>
    </source>
</evidence>
<evidence type="ECO:0000269" key="3">
    <source>
    </source>
</evidence>
<evidence type="ECO:0000303" key="4">
    <source>
    </source>
</evidence>
<gene>
    <name evidence="4" type="primary">adaR</name>
    <name type="ORF">An11g07350</name>
</gene>
<feature type="chain" id="PRO_0000446342" description="C6 finger domain transcription factor adaR">
    <location>
        <begin position="1"/>
        <end position="777"/>
    </location>
</feature>
<feature type="DNA-binding region" description="Zn(2)-C6 fungal-type" evidence="1">
    <location>
        <begin position="24"/>
        <end position="50"/>
    </location>
</feature>
<feature type="region of interest" description="Disordered" evidence="2">
    <location>
        <begin position="1"/>
        <end position="20"/>
    </location>
</feature>
<feature type="region of interest" description="Disordered" evidence="2">
    <location>
        <begin position="61"/>
        <end position="85"/>
    </location>
</feature>
<feature type="region of interest" description="Disordered" evidence="2">
    <location>
        <begin position="111"/>
        <end position="144"/>
    </location>
</feature>
<feature type="region of interest" description="Disordered" evidence="2">
    <location>
        <begin position="182"/>
        <end position="213"/>
    </location>
</feature>
<feature type="region of interest" description="Disordered" evidence="2">
    <location>
        <begin position="419"/>
        <end position="440"/>
    </location>
</feature>
<feature type="region of interest" description="Disordered" evidence="2">
    <location>
        <begin position="468"/>
        <end position="496"/>
    </location>
</feature>
<feature type="region of interest" description="Disordered" evidence="2">
    <location>
        <begin position="655"/>
        <end position="699"/>
    </location>
</feature>
<feature type="compositionally biased region" description="Low complexity" evidence="2">
    <location>
        <begin position="475"/>
        <end position="489"/>
    </location>
</feature>
<feature type="compositionally biased region" description="Pro residues" evidence="2">
    <location>
        <begin position="668"/>
        <end position="677"/>
    </location>
</feature>
<accession>A2QX26</accession>